<feature type="chain" id="PRO_0000260730" description="6-phospho-beta-galactosidase 1">
    <location>
        <begin position="1"/>
        <end position="470"/>
    </location>
</feature>
<feature type="active site" description="Proton donor" evidence="1">
    <location>
        <position position="164"/>
    </location>
</feature>
<feature type="active site" description="Nucleophile" evidence="1">
    <location>
        <position position="378"/>
    </location>
</feature>
<feature type="binding site" evidence="1">
    <location>
        <position position="23"/>
    </location>
    <ligand>
        <name>D-galactose 6-phosphate</name>
        <dbReference type="ChEBI" id="CHEBI:91004"/>
    </ligand>
</feature>
<feature type="binding site" evidence="1">
    <location>
        <position position="120"/>
    </location>
    <ligand>
        <name>D-galactose 6-phosphate</name>
        <dbReference type="ChEBI" id="CHEBI:91004"/>
    </ligand>
</feature>
<feature type="binding site" evidence="1">
    <location>
        <position position="163"/>
    </location>
    <ligand>
        <name>D-galactose 6-phosphate</name>
        <dbReference type="ChEBI" id="CHEBI:91004"/>
    </ligand>
</feature>
<feature type="binding site" evidence="1">
    <location>
        <position position="164"/>
    </location>
    <ligand>
        <name>D-galactose 6-phosphate</name>
        <dbReference type="ChEBI" id="CHEBI:91004"/>
    </ligand>
</feature>
<feature type="binding site" evidence="1">
    <location>
        <position position="300"/>
    </location>
    <ligand>
        <name>D-galactose 6-phosphate</name>
        <dbReference type="ChEBI" id="CHEBI:91004"/>
    </ligand>
</feature>
<feature type="binding site" evidence="1">
    <location>
        <position position="434"/>
    </location>
    <ligand>
        <name>D-galactose 6-phosphate</name>
        <dbReference type="ChEBI" id="CHEBI:91004"/>
    </ligand>
</feature>
<feature type="binding site" evidence="1">
    <location>
        <position position="435"/>
    </location>
    <ligand>
        <name>D-galactose 6-phosphate</name>
        <dbReference type="ChEBI" id="CHEBI:91004"/>
    </ligand>
</feature>
<feature type="binding site" evidence="1">
    <location>
        <position position="441"/>
    </location>
    <ligand>
        <name>D-galactose 6-phosphate</name>
        <dbReference type="ChEBI" id="CHEBI:91004"/>
    </ligand>
</feature>
<feature type="binding site" evidence="1">
    <location>
        <position position="443"/>
    </location>
    <ligand>
        <name>D-galactose 6-phosphate</name>
        <dbReference type="ChEBI" id="CHEBI:91004"/>
    </ligand>
</feature>
<sequence>MENLQVKALPKEFLLGTATAAYQVEGATRVDGKGINMWDVYLQENSPFLPDPASDFYYRYEEDIALAAEHGLQALRLSISWVRIFPDIDGDANVLAVHYYHRVFQSCLKHNVIPFVSLHHFDSPQKMLETGDWLNRENIDRFIRYARFCFQEFTEVKHWFTINELMSLAAGQYIGGQFPPNHHFQLSEAIQANHNMLLAHALAVLEFHQLGIEGKVGCIHALKPGYPIDGQKENILAAKRYDVYNNKFLLDGTFLGYYSEDTLFHLNQILEANNSSFIIEDGDLEIMKRAAPLNTMFGMNYYRSEFIREYKGENRQEFNSTGIKGQSSFKLNALGEFVKKPGIPTTDWDWNIYPQGLFDMLLRIKEEYPQHPVIYLTENGTALKEVKPEGENDIIDDSKRIRYIEQHLHKVLEARDRGVNIQGYFIWSLQDQFSWANGYNKRYGLFFVDYETQKRYIKKSALWVKGLKRN</sequence>
<name>LACG1_STRPN</name>
<proteinExistence type="inferred from homology"/>
<dbReference type="EC" id="3.2.1.85" evidence="1"/>
<dbReference type="EMBL" id="AE005672">
    <property type="protein sequence ID" value="AAK74636.1"/>
    <property type="molecule type" value="Genomic_DNA"/>
</dbReference>
<dbReference type="PIR" id="C95055">
    <property type="entry name" value="C95055"/>
</dbReference>
<dbReference type="SMR" id="Q97SA9"/>
<dbReference type="CAZy" id="GH1">
    <property type="family name" value="Glycoside Hydrolase Family 1"/>
</dbReference>
<dbReference type="PaxDb" id="170187-SP_0477"/>
<dbReference type="EnsemblBacteria" id="AAK74636">
    <property type="protein sequence ID" value="AAK74636"/>
    <property type="gene ID" value="SP_0477"/>
</dbReference>
<dbReference type="KEGG" id="spn:SP_0477"/>
<dbReference type="eggNOG" id="COG2723">
    <property type="taxonomic scope" value="Bacteria"/>
</dbReference>
<dbReference type="PhylomeDB" id="Q97SA9"/>
<dbReference type="BioCyc" id="SPNE170187:G1FZB-494-MONOMER"/>
<dbReference type="UniPathway" id="UPA00542">
    <property type="reaction ID" value="UER00605"/>
</dbReference>
<dbReference type="Proteomes" id="UP000000585">
    <property type="component" value="Chromosome"/>
</dbReference>
<dbReference type="GO" id="GO:0005829">
    <property type="term" value="C:cytosol"/>
    <property type="evidence" value="ECO:0007669"/>
    <property type="project" value="TreeGrafter"/>
</dbReference>
<dbReference type="GO" id="GO:0033920">
    <property type="term" value="F:6-phospho-beta-galactosidase activity"/>
    <property type="evidence" value="ECO:0007669"/>
    <property type="project" value="UniProtKB-UniRule"/>
</dbReference>
<dbReference type="GO" id="GO:0008422">
    <property type="term" value="F:beta-glucosidase activity"/>
    <property type="evidence" value="ECO:0007669"/>
    <property type="project" value="TreeGrafter"/>
</dbReference>
<dbReference type="GO" id="GO:0019512">
    <property type="term" value="P:lactose catabolic process via tagatose-6-phosphate"/>
    <property type="evidence" value="ECO:0007669"/>
    <property type="project" value="InterPro"/>
</dbReference>
<dbReference type="FunFam" id="3.20.20.80:FF:000004">
    <property type="entry name" value="Beta-glucosidase 6-phospho-beta-glucosidase"/>
    <property type="match status" value="1"/>
</dbReference>
<dbReference type="Gene3D" id="3.20.20.80">
    <property type="entry name" value="Glycosidases"/>
    <property type="match status" value="1"/>
</dbReference>
<dbReference type="HAMAP" id="MF_01574">
    <property type="entry name" value="LacG"/>
    <property type="match status" value="1"/>
</dbReference>
<dbReference type="InterPro" id="IPR005928">
    <property type="entry name" value="6P-beta-galactosidase"/>
</dbReference>
<dbReference type="InterPro" id="IPR001360">
    <property type="entry name" value="Glyco_hydro_1"/>
</dbReference>
<dbReference type="InterPro" id="IPR017853">
    <property type="entry name" value="Glycoside_hydrolase_SF"/>
</dbReference>
<dbReference type="NCBIfam" id="TIGR01233">
    <property type="entry name" value="lacG"/>
    <property type="match status" value="1"/>
</dbReference>
<dbReference type="NCBIfam" id="NF010036">
    <property type="entry name" value="PRK13511.1"/>
    <property type="match status" value="1"/>
</dbReference>
<dbReference type="PANTHER" id="PTHR10353">
    <property type="entry name" value="GLYCOSYL HYDROLASE"/>
    <property type="match status" value="1"/>
</dbReference>
<dbReference type="PANTHER" id="PTHR10353:SF36">
    <property type="entry name" value="LP05116P"/>
    <property type="match status" value="1"/>
</dbReference>
<dbReference type="Pfam" id="PF00232">
    <property type="entry name" value="Glyco_hydro_1"/>
    <property type="match status" value="1"/>
</dbReference>
<dbReference type="PRINTS" id="PR00131">
    <property type="entry name" value="GLHYDRLASE1"/>
</dbReference>
<dbReference type="SUPFAM" id="SSF51445">
    <property type="entry name" value="(Trans)glycosidases"/>
    <property type="match status" value="1"/>
</dbReference>
<organism>
    <name type="scientific">Streptococcus pneumoniae serotype 4 (strain ATCC BAA-334 / TIGR4)</name>
    <dbReference type="NCBI Taxonomy" id="170187"/>
    <lineage>
        <taxon>Bacteria</taxon>
        <taxon>Bacillati</taxon>
        <taxon>Bacillota</taxon>
        <taxon>Bacilli</taxon>
        <taxon>Lactobacillales</taxon>
        <taxon>Streptococcaceae</taxon>
        <taxon>Streptococcus</taxon>
    </lineage>
</organism>
<keyword id="KW-0326">Glycosidase</keyword>
<keyword id="KW-0378">Hydrolase</keyword>
<keyword id="KW-1185">Reference proteome</keyword>
<accession>Q97SA9</accession>
<gene>
    <name evidence="1" type="primary">lacG1</name>
    <name type="synonym">lacG-1</name>
    <name type="ordered locus">SP_0477</name>
</gene>
<evidence type="ECO:0000255" key="1">
    <source>
        <dbReference type="HAMAP-Rule" id="MF_01574"/>
    </source>
</evidence>
<comment type="catalytic activity">
    <reaction evidence="1">
        <text>a 6-phospho-beta-D-galactoside + H2O = D-galactose 6-phosphate + an alcohol</text>
        <dbReference type="Rhea" id="RHEA:24568"/>
        <dbReference type="ChEBI" id="CHEBI:15377"/>
        <dbReference type="ChEBI" id="CHEBI:30879"/>
        <dbReference type="ChEBI" id="CHEBI:58534"/>
        <dbReference type="ChEBI" id="CHEBI:91004"/>
        <dbReference type="EC" id="3.2.1.85"/>
    </reaction>
</comment>
<comment type="pathway">
    <text evidence="1">Carbohydrate metabolism; lactose degradation; D-galactose 6-phosphate and beta-D-glucose from lactose 6-phosphate: step 1/1.</text>
</comment>
<comment type="similarity">
    <text evidence="1">Belongs to the glycosyl hydrolase 1 family.</text>
</comment>
<reference key="1">
    <citation type="journal article" date="2001" name="Science">
        <title>Complete genome sequence of a virulent isolate of Streptococcus pneumoniae.</title>
        <authorList>
            <person name="Tettelin H."/>
            <person name="Nelson K.E."/>
            <person name="Paulsen I.T."/>
            <person name="Eisen J.A."/>
            <person name="Read T.D."/>
            <person name="Peterson S.N."/>
            <person name="Heidelberg J.F."/>
            <person name="DeBoy R.T."/>
            <person name="Haft D.H."/>
            <person name="Dodson R.J."/>
            <person name="Durkin A.S."/>
            <person name="Gwinn M.L."/>
            <person name="Kolonay J.F."/>
            <person name="Nelson W.C."/>
            <person name="Peterson J.D."/>
            <person name="Umayam L.A."/>
            <person name="White O."/>
            <person name="Salzberg S.L."/>
            <person name="Lewis M.R."/>
            <person name="Radune D."/>
            <person name="Holtzapple E.K."/>
            <person name="Khouri H.M."/>
            <person name="Wolf A.M."/>
            <person name="Utterback T.R."/>
            <person name="Hansen C.L."/>
            <person name="McDonald L.A."/>
            <person name="Feldblyum T.V."/>
            <person name="Angiuoli S.V."/>
            <person name="Dickinson T."/>
            <person name="Hickey E.K."/>
            <person name="Holt I.E."/>
            <person name="Loftus B.J."/>
            <person name="Yang F."/>
            <person name="Smith H.O."/>
            <person name="Venter J.C."/>
            <person name="Dougherty B.A."/>
            <person name="Morrison D.A."/>
            <person name="Hollingshead S.K."/>
            <person name="Fraser C.M."/>
        </authorList>
    </citation>
    <scope>NUCLEOTIDE SEQUENCE [LARGE SCALE GENOMIC DNA]</scope>
    <source>
        <strain>ATCC BAA-334 / TIGR4</strain>
    </source>
</reference>
<protein>
    <recommendedName>
        <fullName evidence="1">6-phospho-beta-galactosidase 1</fullName>
        <ecNumber evidence="1">3.2.1.85</ecNumber>
    </recommendedName>
    <alternativeName>
        <fullName evidence="1">Beta-D-phosphogalactoside galactohydrolase 1</fullName>
        <shortName evidence="1">PGALase 1</shortName>
    </alternativeName>
    <alternativeName>
        <fullName evidence="1">P-beta-Gal 1</fullName>
        <shortName evidence="1">PBG 1</shortName>
    </alternativeName>
</protein>